<reference key="1">
    <citation type="journal article" date="2004" name="Nucleic Acids Res.">
        <title>Whole genome comparisons of serotype 4b and 1/2a strains of the food-borne pathogen Listeria monocytogenes reveal new insights into the core genome components of this species.</title>
        <authorList>
            <person name="Nelson K.E."/>
            <person name="Fouts D.E."/>
            <person name="Mongodin E.F."/>
            <person name="Ravel J."/>
            <person name="DeBoy R.T."/>
            <person name="Kolonay J.F."/>
            <person name="Rasko D.A."/>
            <person name="Angiuoli S.V."/>
            <person name="Gill S.R."/>
            <person name="Paulsen I.T."/>
            <person name="Peterson J.D."/>
            <person name="White O."/>
            <person name="Nelson W.C."/>
            <person name="Nierman W.C."/>
            <person name="Beanan M.J."/>
            <person name="Brinkac L.M."/>
            <person name="Daugherty S.C."/>
            <person name="Dodson R.J."/>
            <person name="Durkin A.S."/>
            <person name="Madupu R."/>
            <person name="Haft D.H."/>
            <person name="Selengut J."/>
            <person name="Van Aken S.E."/>
            <person name="Khouri H.M."/>
            <person name="Fedorova N."/>
            <person name="Forberger H.A."/>
            <person name="Tran B."/>
            <person name="Kathariou S."/>
            <person name="Wonderling L.D."/>
            <person name="Uhlich G.A."/>
            <person name="Bayles D.O."/>
            <person name="Luchansky J.B."/>
            <person name="Fraser C.M."/>
        </authorList>
    </citation>
    <scope>NUCLEOTIDE SEQUENCE [LARGE SCALE GENOMIC DNA]</scope>
    <source>
        <strain>F2365</strain>
    </source>
</reference>
<evidence type="ECO:0000255" key="1">
    <source>
        <dbReference type="HAMAP-Rule" id="MF_00323"/>
    </source>
</evidence>
<protein>
    <recommendedName>
        <fullName evidence="1">Coproporphyrin III ferrochelatase</fullName>
        <ecNumber evidence="1">4.99.1.9</ecNumber>
    </recommendedName>
</protein>
<name>CPFC_LISMF</name>
<comment type="function">
    <text evidence="1">Involved in coproporphyrin-dependent heme b biosynthesis. Catalyzes the insertion of ferrous iron into coproporphyrin III to form Fe-coproporphyrin III.</text>
</comment>
<comment type="catalytic activity">
    <reaction evidence="1">
        <text>Fe-coproporphyrin III + 2 H(+) = coproporphyrin III + Fe(2+)</text>
        <dbReference type="Rhea" id="RHEA:49572"/>
        <dbReference type="ChEBI" id="CHEBI:15378"/>
        <dbReference type="ChEBI" id="CHEBI:29033"/>
        <dbReference type="ChEBI" id="CHEBI:68438"/>
        <dbReference type="ChEBI" id="CHEBI:131725"/>
        <dbReference type="EC" id="4.99.1.9"/>
    </reaction>
    <physiologicalReaction direction="right-to-left" evidence="1">
        <dbReference type="Rhea" id="RHEA:49574"/>
    </physiologicalReaction>
</comment>
<comment type="pathway">
    <text evidence="1">Porphyrin-containing compound metabolism; protoheme biosynthesis.</text>
</comment>
<comment type="subcellular location">
    <subcellularLocation>
        <location evidence="1">Cytoplasm</location>
    </subcellularLocation>
</comment>
<comment type="similarity">
    <text evidence="1">Belongs to the ferrochelatase family.</text>
</comment>
<dbReference type="EC" id="4.99.1.9" evidence="1"/>
<dbReference type="EMBL" id="AE017262">
    <property type="protein sequence ID" value="AAT05011.1"/>
    <property type="molecule type" value="Genomic_DNA"/>
</dbReference>
<dbReference type="SMR" id="Q71XF4"/>
<dbReference type="KEGG" id="lmf:LMOf2365_2244"/>
<dbReference type="HOGENOM" id="CLU_018884_2_1_9"/>
<dbReference type="UniPathway" id="UPA00252"/>
<dbReference type="GO" id="GO:0005737">
    <property type="term" value="C:cytoplasm"/>
    <property type="evidence" value="ECO:0007669"/>
    <property type="project" value="UniProtKB-SubCell"/>
</dbReference>
<dbReference type="GO" id="GO:0004325">
    <property type="term" value="F:ferrochelatase activity"/>
    <property type="evidence" value="ECO:0007669"/>
    <property type="project" value="UniProtKB-UniRule"/>
</dbReference>
<dbReference type="GO" id="GO:0046872">
    <property type="term" value="F:metal ion binding"/>
    <property type="evidence" value="ECO:0007669"/>
    <property type="project" value="UniProtKB-KW"/>
</dbReference>
<dbReference type="GO" id="GO:0006783">
    <property type="term" value="P:heme biosynthetic process"/>
    <property type="evidence" value="ECO:0007669"/>
    <property type="project" value="UniProtKB-UniRule"/>
</dbReference>
<dbReference type="CDD" id="cd00419">
    <property type="entry name" value="Ferrochelatase_C"/>
    <property type="match status" value="1"/>
</dbReference>
<dbReference type="CDD" id="cd03411">
    <property type="entry name" value="Ferrochelatase_N"/>
    <property type="match status" value="1"/>
</dbReference>
<dbReference type="FunFam" id="3.40.50.1400:FF:000009">
    <property type="entry name" value="Ferrochelatase"/>
    <property type="match status" value="1"/>
</dbReference>
<dbReference type="Gene3D" id="3.40.50.1400">
    <property type="match status" value="2"/>
</dbReference>
<dbReference type="HAMAP" id="MF_00323">
    <property type="entry name" value="Ferrochelatase"/>
    <property type="match status" value="1"/>
</dbReference>
<dbReference type="InterPro" id="IPR001015">
    <property type="entry name" value="Ferrochelatase"/>
</dbReference>
<dbReference type="InterPro" id="IPR019772">
    <property type="entry name" value="Ferrochelatase_AS"/>
</dbReference>
<dbReference type="InterPro" id="IPR033644">
    <property type="entry name" value="Ferrochelatase_C"/>
</dbReference>
<dbReference type="InterPro" id="IPR033659">
    <property type="entry name" value="Ferrochelatase_N"/>
</dbReference>
<dbReference type="NCBIfam" id="TIGR00109">
    <property type="entry name" value="hemH"/>
    <property type="match status" value="1"/>
</dbReference>
<dbReference type="NCBIfam" id="NF009095">
    <property type="entry name" value="PRK12435.1"/>
    <property type="match status" value="1"/>
</dbReference>
<dbReference type="PANTHER" id="PTHR11108">
    <property type="entry name" value="FERROCHELATASE"/>
    <property type="match status" value="1"/>
</dbReference>
<dbReference type="PANTHER" id="PTHR11108:SF1">
    <property type="entry name" value="FERROCHELATASE, MITOCHONDRIAL"/>
    <property type="match status" value="1"/>
</dbReference>
<dbReference type="Pfam" id="PF00762">
    <property type="entry name" value="Ferrochelatase"/>
    <property type="match status" value="1"/>
</dbReference>
<dbReference type="SUPFAM" id="SSF53800">
    <property type="entry name" value="Chelatase"/>
    <property type="match status" value="1"/>
</dbReference>
<dbReference type="PROSITE" id="PS00534">
    <property type="entry name" value="FERROCHELATASE"/>
    <property type="match status" value="1"/>
</dbReference>
<organism>
    <name type="scientific">Listeria monocytogenes serotype 4b (strain F2365)</name>
    <dbReference type="NCBI Taxonomy" id="265669"/>
    <lineage>
        <taxon>Bacteria</taxon>
        <taxon>Bacillati</taxon>
        <taxon>Bacillota</taxon>
        <taxon>Bacilli</taxon>
        <taxon>Bacillales</taxon>
        <taxon>Listeriaceae</taxon>
        <taxon>Listeria</taxon>
    </lineage>
</organism>
<proteinExistence type="inferred from homology"/>
<accession>Q71XF4</accession>
<gene>
    <name evidence="1" type="primary">cpfC</name>
    <name type="ordered locus">LMOf2365_2244</name>
</gene>
<feature type="chain" id="PRO_0000175160" description="Coproporphyrin III ferrochelatase">
    <location>
        <begin position="1"/>
        <end position="309"/>
    </location>
</feature>
<feature type="binding site" description="axial binding residue" evidence="1">
    <location>
        <position position="12"/>
    </location>
    <ligand>
        <name>Fe-coproporphyrin III</name>
        <dbReference type="ChEBI" id="CHEBI:68438"/>
    </ligand>
    <ligandPart>
        <name>Fe</name>
        <dbReference type="ChEBI" id="CHEBI:18248"/>
    </ligandPart>
</feature>
<feature type="binding site" evidence="1">
    <location>
        <position position="29"/>
    </location>
    <ligand>
        <name>Fe-coproporphyrin III</name>
        <dbReference type="ChEBI" id="CHEBI:68438"/>
    </ligand>
</feature>
<feature type="binding site" evidence="1">
    <location>
        <begin position="45"/>
        <end position="46"/>
    </location>
    <ligand>
        <name>Fe-coproporphyrin III</name>
        <dbReference type="ChEBI" id="CHEBI:68438"/>
    </ligand>
</feature>
<feature type="binding site" evidence="1">
    <location>
        <position position="53"/>
    </location>
    <ligand>
        <name>Fe-coproporphyrin III</name>
        <dbReference type="ChEBI" id="CHEBI:68438"/>
    </ligand>
</feature>
<feature type="binding site" evidence="1">
    <location>
        <position position="124"/>
    </location>
    <ligand>
        <name>Fe-coproporphyrin III</name>
        <dbReference type="ChEBI" id="CHEBI:68438"/>
    </ligand>
</feature>
<feature type="binding site" evidence="1">
    <location>
        <position position="182"/>
    </location>
    <ligand>
        <name>Fe(2+)</name>
        <dbReference type="ChEBI" id="CHEBI:29033"/>
    </ligand>
</feature>
<feature type="binding site" evidence="1">
    <location>
        <position position="263"/>
    </location>
    <ligand>
        <name>Fe(2+)</name>
        <dbReference type="ChEBI" id="CHEBI:29033"/>
    </ligand>
</feature>
<keyword id="KW-0963">Cytoplasm</keyword>
<keyword id="KW-0350">Heme biosynthesis</keyword>
<keyword id="KW-0408">Iron</keyword>
<keyword id="KW-0456">Lyase</keyword>
<keyword id="KW-0479">Metal-binding</keyword>
<keyword id="KW-0627">Porphyrin biosynthesis</keyword>
<sequence length="309" mass="35405">MTKKVGLLVMAYGTPYKDEDIERYYTDIRHGHKPSEEMIADLRGRYHAIGGLSPLAKITEAQAYGLEKALNESQDEVEFKAYIGLKHIEPFIEDAVEAMHKDGIEEAISIVLAPHYSSFSVEAYNKRAKDAADKLGGLRIKAINDWYKQPKFIQMWADRINETAKQIPADELLDTVLIVSAHSLPEKIKQHNDPYPDQLQETADFIFEKVVVPHYALGWQSEGKTGEPWLGPDVQDLTRELYGREKYKHFIYTPVGFVAEHLEVLYDNDYECKVVTDEVGATYHRPPMPNSDPEFLEVLRTVVWEKYSN</sequence>